<gene>
    <name evidence="1" type="primary">dxs</name>
    <name type="ordered locus">SPAB_03161</name>
</gene>
<reference key="1">
    <citation type="submission" date="2007-11" db="EMBL/GenBank/DDBJ databases">
        <authorList>
            <consortium name="The Salmonella enterica serovar Paratyphi B Genome Sequencing Project"/>
            <person name="McClelland M."/>
            <person name="Sanderson E.K."/>
            <person name="Porwollik S."/>
            <person name="Spieth J."/>
            <person name="Clifton W.S."/>
            <person name="Fulton R."/>
            <person name="Cordes M."/>
            <person name="Wollam A."/>
            <person name="Shah N."/>
            <person name="Pepin K."/>
            <person name="Bhonagiri V."/>
            <person name="Nash W."/>
            <person name="Johnson M."/>
            <person name="Thiruvilangam P."/>
            <person name="Wilson R."/>
        </authorList>
    </citation>
    <scope>NUCLEOTIDE SEQUENCE [LARGE SCALE GENOMIC DNA]</scope>
    <source>
        <strain>ATCC BAA-1250 / SPB7</strain>
    </source>
</reference>
<protein>
    <recommendedName>
        <fullName evidence="1">1-deoxy-D-xylulose-5-phosphate synthase</fullName>
        <ecNumber evidence="1">2.2.1.7</ecNumber>
    </recommendedName>
    <alternativeName>
        <fullName evidence="1">1-deoxyxylulose-5-phosphate synthase</fullName>
        <shortName evidence="1">DXP synthase</shortName>
        <shortName evidence="1">DXPS</shortName>
    </alternativeName>
</protein>
<feature type="chain" id="PRO_1000079101" description="1-deoxy-D-xylulose-5-phosphate synthase">
    <location>
        <begin position="1"/>
        <end position="620"/>
    </location>
</feature>
<feature type="binding site" evidence="1">
    <location>
        <position position="80"/>
    </location>
    <ligand>
        <name>thiamine diphosphate</name>
        <dbReference type="ChEBI" id="CHEBI:58937"/>
    </ligand>
</feature>
<feature type="binding site" evidence="1">
    <location>
        <begin position="121"/>
        <end position="123"/>
    </location>
    <ligand>
        <name>thiamine diphosphate</name>
        <dbReference type="ChEBI" id="CHEBI:58937"/>
    </ligand>
</feature>
<feature type="binding site" evidence="1">
    <location>
        <position position="152"/>
    </location>
    <ligand>
        <name>Mg(2+)</name>
        <dbReference type="ChEBI" id="CHEBI:18420"/>
    </ligand>
</feature>
<feature type="binding site" evidence="1">
    <location>
        <begin position="153"/>
        <end position="154"/>
    </location>
    <ligand>
        <name>thiamine diphosphate</name>
        <dbReference type="ChEBI" id="CHEBI:58937"/>
    </ligand>
</feature>
<feature type="binding site" evidence="1">
    <location>
        <position position="181"/>
    </location>
    <ligand>
        <name>Mg(2+)</name>
        <dbReference type="ChEBI" id="CHEBI:18420"/>
    </ligand>
</feature>
<feature type="binding site" evidence="1">
    <location>
        <position position="181"/>
    </location>
    <ligand>
        <name>thiamine diphosphate</name>
        <dbReference type="ChEBI" id="CHEBI:58937"/>
    </ligand>
</feature>
<feature type="binding site" evidence="1">
    <location>
        <position position="288"/>
    </location>
    <ligand>
        <name>thiamine diphosphate</name>
        <dbReference type="ChEBI" id="CHEBI:58937"/>
    </ligand>
</feature>
<feature type="binding site" evidence="1">
    <location>
        <position position="370"/>
    </location>
    <ligand>
        <name>thiamine diphosphate</name>
        <dbReference type="ChEBI" id="CHEBI:58937"/>
    </ligand>
</feature>
<keyword id="KW-0414">Isoprene biosynthesis</keyword>
<keyword id="KW-0460">Magnesium</keyword>
<keyword id="KW-0479">Metal-binding</keyword>
<keyword id="KW-0784">Thiamine biosynthesis</keyword>
<keyword id="KW-0786">Thiamine pyrophosphate</keyword>
<keyword id="KW-0808">Transferase</keyword>
<accession>A9MX09</accession>
<proteinExistence type="inferred from homology"/>
<dbReference type="EC" id="2.2.1.7" evidence="1"/>
<dbReference type="EMBL" id="CP000886">
    <property type="protein sequence ID" value="ABX68522.1"/>
    <property type="molecule type" value="Genomic_DNA"/>
</dbReference>
<dbReference type="RefSeq" id="WP_000006777.1">
    <property type="nucleotide sequence ID" value="NC_010102.1"/>
</dbReference>
<dbReference type="SMR" id="A9MX09"/>
<dbReference type="KEGG" id="spq:SPAB_03161"/>
<dbReference type="PATRIC" id="fig|1016998.12.peg.2982"/>
<dbReference type="HOGENOM" id="CLU_009227_1_4_6"/>
<dbReference type="BioCyc" id="SENT1016998:SPAB_RS12910-MONOMER"/>
<dbReference type="UniPathway" id="UPA00064">
    <property type="reaction ID" value="UER00091"/>
</dbReference>
<dbReference type="Proteomes" id="UP000008556">
    <property type="component" value="Chromosome"/>
</dbReference>
<dbReference type="GO" id="GO:0005829">
    <property type="term" value="C:cytosol"/>
    <property type="evidence" value="ECO:0007669"/>
    <property type="project" value="TreeGrafter"/>
</dbReference>
<dbReference type="GO" id="GO:0008661">
    <property type="term" value="F:1-deoxy-D-xylulose-5-phosphate synthase activity"/>
    <property type="evidence" value="ECO:0007669"/>
    <property type="project" value="UniProtKB-UniRule"/>
</dbReference>
<dbReference type="GO" id="GO:0000287">
    <property type="term" value="F:magnesium ion binding"/>
    <property type="evidence" value="ECO:0007669"/>
    <property type="project" value="UniProtKB-UniRule"/>
</dbReference>
<dbReference type="GO" id="GO:0030976">
    <property type="term" value="F:thiamine pyrophosphate binding"/>
    <property type="evidence" value="ECO:0007669"/>
    <property type="project" value="UniProtKB-UniRule"/>
</dbReference>
<dbReference type="GO" id="GO:0052865">
    <property type="term" value="P:1-deoxy-D-xylulose 5-phosphate biosynthetic process"/>
    <property type="evidence" value="ECO:0007669"/>
    <property type="project" value="UniProtKB-UniPathway"/>
</dbReference>
<dbReference type="GO" id="GO:0019288">
    <property type="term" value="P:isopentenyl diphosphate biosynthetic process, methylerythritol 4-phosphate pathway"/>
    <property type="evidence" value="ECO:0007669"/>
    <property type="project" value="TreeGrafter"/>
</dbReference>
<dbReference type="GO" id="GO:0016114">
    <property type="term" value="P:terpenoid biosynthetic process"/>
    <property type="evidence" value="ECO:0007669"/>
    <property type="project" value="UniProtKB-UniRule"/>
</dbReference>
<dbReference type="GO" id="GO:0009228">
    <property type="term" value="P:thiamine biosynthetic process"/>
    <property type="evidence" value="ECO:0007669"/>
    <property type="project" value="UniProtKB-UniRule"/>
</dbReference>
<dbReference type="CDD" id="cd02007">
    <property type="entry name" value="TPP_DXS"/>
    <property type="match status" value="1"/>
</dbReference>
<dbReference type="CDD" id="cd07033">
    <property type="entry name" value="TPP_PYR_DXS_TK_like"/>
    <property type="match status" value="1"/>
</dbReference>
<dbReference type="FunFam" id="3.40.50.920:FF:000002">
    <property type="entry name" value="1-deoxy-D-xylulose-5-phosphate synthase"/>
    <property type="match status" value="1"/>
</dbReference>
<dbReference type="FunFam" id="3.40.50.970:FF:000005">
    <property type="entry name" value="1-deoxy-D-xylulose-5-phosphate synthase"/>
    <property type="match status" value="1"/>
</dbReference>
<dbReference type="Gene3D" id="3.40.50.920">
    <property type="match status" value="1"/>
</dbReference>
<dbReference type="Gene3D" id="3.40.50.970">
    <property type="match status" value="2"/>
</dbReference>
<dbReference type="HAMAP" id="MF_00315">
    <property type="entry name" value="DXP_synth"/>
    <property type="match status" value="1"/>
</dbReference>
<dbReference type="InterPro" id="IPR005477">
    <property type="entry name" value="Dxylulose-5-P_synthase"/>
</dbReference>
<dbReference type="InterPro" id="IPR029061">
    <property type="entry name" value="THDP-binding"/>
</dbReference>
<dbReference type="InterPro" id="IPR009014">
    <property type="entry name" value="Transketo_C/PFOR_II"/>
</dbReference>
<dbReference type="InterPro" id="IPR005475">
    <property type="entry name" value="Transketolase-like_Pyr-bd"/>
</dbReference>
<dbReference type="InterPro" id="IPR020826">
    <property type="entry name" value="Transketolase_BS"/>
</dbReference>
<dbReference type="InterPro" id="IPR033248">
    <property type="entry name" value="Transketolase_C"/>
</dbReference>
<dbReference type="InterPro" id="IPR049557">
    <property type="entry name" value="Transketolase_CS"/>
</dbReference>
<dbReference type="NCBIfam" id="TIGR00204">
    <property type="entry name" value="dxs"/>
    <property type="match status" value="1"/>
</dbReference>
<dbReference type="NCBIfam" id="NF003933">
    <property type="entry name" value="PRK05444.2-2"/>
    <property type="match status" value="1"/>
</dbReference>
<dbReference type="PANTHER" id="PTHR43322">
    <property type="entry name" value="1-D-DEOXYXYLULOSE 5-PHOSPHATE SYNTHASE-RELATED"/>
    <property type="match status" value="1"/>
</dbReference>
<dbReference type="PANTHER" id="PTHR43322:SF5">
    <property type="entry name" value="1-DEOXY-D-XYLULOSE-5-PHOSPHATE SYNTHASE, CHLOROPLASTIC"/>
    <property type="match status" value="1"/>
</dbReference>
<dbReference type="Pfam" id="PF13292">
    <property type="entry name" value="DXP_synthase_N"/>
    <property type="match status" value="1"/>
</dbReference>
<dbReference type="Pfam" id="PF02779">
    <property type="entry name" value="Transket_pyr"/>
    <property type="match status" value="1"/>
</dbReference>
<dbReference type="Pfam" id="PF02780">
    <property type="entry name" value="Transketolase_C"/>
    <property type="match status" value="1"/>
</dbReference>
<dbReference type="SMART" id="SM00861">
    <property type="entry name" value="Transket_pyr"/>
    <property type="match status" value="1"/>
</dbReference>
<dbReference type="SUPFAM" id="SSF52518">
    <property type="entry name" value="Thiamin diphosphate-binding fold (THDP-binding)"/>
    <property type="match status" value="2"/>
</dbReference>
<dbReference type="SUPFAM" id="SSF52922">
    <property type="entry name" value="TK C-terminal domain-like"/>
    <property type="match status" value="1"/>
</dbReference>
<dbReference type="PROSITE" id="PS00801">
    <property type="entry name" value="TRANSKETOLASE_1"/>
    <property type="match status" value="1"/>
</dbReference>
<dbReference type="PROSITE" id="PS00802">
    <property type="entry name" value="TRANSKETOLASE_2"/>
    <property type="match status" value="1"/>
</dbReference>
<sequence length="620" mass="67468">MSFDIAKYPTLALVDSTQELRLLPKESLPKLCDELRRYLLDSVSRSSGHFASGLGTVELTVALHYVYNTPFDQLIWDVGHQAYPHKILTGRRDKIGTIRQKGGLHPFPWRGESEYDVLSVGHSSTSISAGIGIAVAAEKEGKDRRTVCVIGDGAITAGMAFEAMNHAGDIRPDMLVILNDNEMSISENVGALNNHLAQLLSGKLYSSLREGGKKVFSGVPPIKELLKRTEEHIKGMVVPGTLFEELGFNYIGPVDGHDVMGLISTLKNMRDLKGPQFLHIMTKKGRGYEPAEKDPITFHAVPKFDPSSGCLPKSSGGLPGYSKIFGDWLCETAAKDSKLMAITPAMREGSGMVEFSRKFPDRYFDVAIAEQHAVTFAAGLAIGGYKPVVAIYSTFLQRAYDQVIHDVAIQKLPVMFAIDRAGIVGADGQTHQGAFDLSYLRCIPDMVIMTPSDENECRQMLFTGYHYNDGPTAVRYPRGNAQGVALTPLEKLPIGKGLVKRHGEKLAILNFGTLMPEAAKVAEALNATLVDMRFVKPLDDTLILEMAAQHDALVTLEENAIMGGAGSGVNEVLMAHRKPVPVLNIGLPDFFIPQGTQEEARAELGLDAAGIEAKIKAWLA</sequence>
<comment type="function">
    <text evidence="1">Catalyzes the acyloin condensation reaction between C atoms 2 and 3 of pyruvate and glyceraldehyde 3-phosphate to yield 1-deoxy-D-xylulose-5-phosphate (DXP).</text>
</comment>
<comment type="catalytic activity">
    <reaction evidence="1">
        <text>D-glyceraldehyde 3-phosphate + pyruvate + H(+) = 1-deoxy-D-xylulose 5-phosphate + CO2</text>
        <dbReference type="Rhea" id="RHEA:12605"/>
        <dbReference type="ChEBI" id="CHEBI:15361"/>
        <dbReference type="ChEBI" id="CHEBI:15378"/>
        <dbReference type="ChEBI" id="CHEBI:16526"/>
        <dbReference type="ChEBI" id="CHEBI:57792"/>
        <dbReference type="ChEBI" id="CHEBI:59776"/>
        <dbReference type="EC" id="2.2.1.7"/>
    </reaction>
</comment>
<comment type="cofactor">
    <cofactor evidence="1">
        <name>Mg(2+)</name>
        <dbReference type="ChEBI" id="CHEBI:18420"/>
    </cofactor>
    <text evidence="1">Binds 1 Mg(2+) ion per subunit.</text>
</comment>
<comment type="cofactor">
    <cofactor evidence="1">
        <name>thiamine diphosphate</name>
        <dbReference type="ChEBI" id="CHEBI:58937"/>
    </cofactor>
    <text evidence="1">Binds 1 thiamine pyrophosphate per subunit.</text>
</comment>
<comment type="pathway">
    <text evidence="1">Metabolic intermediate biosynthesis; 1-deoxy-D-xylulose 5-phosphate biosynthesis; 1-deoxy-D-xylulose 5-phosphate from D-glyceraldehyde 3-phosphate and pyruvate: step 1/1.</text>
</comment>
<comment type="subunit">
    <text evidence="1">Homodimer.</text>
</comment>
<comment type="similarity">
    <text evidence="1">Belongs to the transketolase family. DXPS subfamily.</text>
</comment>
<name>DXS_SALPB</name>
<organism>
    <name type="scientific">Salmonella paratyphi B (strain ATCC BAA-1250 / SPB7)</name>
    <dbReference type="NCBI Taxonomy" id="1016998"/>
    <lineage>
        <taxon>Bacteria</taxon>
        <taxon>Pseudomonadati</taxon>
        <taxon>Pseudomonadota</taxon>
        <taxon>Gammaproteobacteria</taxon>
        <taxon>Enterobacterales</taxon>
        <taxon>Enterobacteriaceae</taxon>
        <taxon>Salmonella</taxon>
    </lineage>
</organism>
<evidence type="ECO:0000255" key="1">
    <source>
        <dbReference type="HAMAP-Rule" id="MF_00315"/>
    </source>
</evidence>